<name>CTAA_PARDP</name>
<organism>
    <name type="scientific">Paracoccus denitrificans (strain Pd 1222)</name>
    <dbReference type="NCBI Taxonomy" id="318586"/>
    <lineage>
        <taxon>Bacteria</taxon>
        <taxon>Pseudomonadati</taxon>
        <taxon>Pseudomonadota</taxon>
        <taxon>Alphaproteobacteria</taxon>
        <taxon>Rhodobacterales</taxon>
        <taxon>Paracoccaceae</taxon>
        <taxon>Paracoccus</taxon>
    </lineage>
</organism>
<gene>
    <name evidence="1" type="primary">ctaA</name>
    <name type="ordered locus">Pden_3699</name>
</gene>
<accession>A1B8C2</accession>
<evidence type="ECO:0000255" key="1">
    <source>
        <dbReference type="HAMAP-Rule" id="MF_01665"/>
    </source>
</evidence>
<evidence type="ECO:0000256" key="2">
    <source>
        <dbReference type="SAM" id="MobiDB-lite"/>
    </source>
</evidence>
<evidence type="ECO:0000305" key="3"/>
<proteinExistence type="inferred from homology"/>
<reference key="1">
    <citation type="submission" date="2006-12" db="EMBL/GenBank/DDBJ databases">
        <title>Complete sequence of chromosome 2 of Paracoccus denitrificans PD1222.</title>
        <authorList>
            <person name="Copeland A."/>
            <person name="Lucas S."/>
            <person name="Lapidus A."/>
            <person name="Barry K."/>
            <person name="Detter J.C."/>
            <person name="Glavina del Rio T."/>
            <person name="Hammon N."/>
            <person name="Israni S."/>
            <person name="Dalin E."/>
            <person name="Tice H."/>
            <person name="Pitluck S."/>
            <person name="Munk A.C."/>
            <person name="Brettin T."/>
            <person name="Bruce D."/>
            <person name="Han C."/>
            <person name="Tapia R."/>
            <person name="Gilna P."/>
            <person name="Schmutz J."/>
            <person name="Larimer F."/>
            <person name="Land M."/>
            <person name="Hauser L."/>
            <person name="Kyrpides N."/>
            <person name="Lykidis A."/>
            <person name="Spiro S."/>
            <person name="Richardson D.J."/>
            <person name="Moir J.W.B."/>
            <person name="Ferguson S.J."/>
            <person name="van Spanning R.J.M."/>
            <person name="Richardson P."/>
        </authorList>
    </citation>
    <scope>NUCLEOTIDE SEQUENCE [LARGE SCALE GENOMIC DNA]</scope>
    <source>
        <strain>Pd 1222</strain>
    </source>
</reference>
<feature type="chain" id="PRO_0000349057" description="Heme A synthase">
    <location>
        <begin position="1"/>
        <end position="381"/>
    </location>
</feature>
<feature type="transmembrane region" description="Helical" evidence="1">
    <location>
        <begin position="34"/>
        <end position="54"/>
    </location>
</feature>
<feature type="transmembrane region" description="Helical" evidence="1">
    <location>
        <begin position="120"/>
        <end position="140"/>
    </location>
</feature>
<feature type="transmembrane region" description="Helical" evidence="1">
    <location>
        <begin position="151"/>
        <end position="171"/>
    </location>
</feature>
<feature type="transmembrane region" description="Helical" evidence="1">
    <location>
        <begin position="185"/>
        <end position="205"/>
    </location>
</feature>
<feature type="transmembrane region" description="Helical" evidence="1">
    <location>
        <begin position="228"/>
        <end position="248"/>
    </location>
</feature>
<feature type="transmembrane region" description="Helical" evidence="1">
    <location>
        <begin position="285"/>
        <end position="305"/>
    </location>
</feature>
<feature type="transmembrane region" description="Helical" evidence="1">
    <location>
        <begin position="319"/>
        <end position="339"/>
    </location>
</feature>
<feature type="transmembrane region" description="Helical" evidence="1">
    <location>
        <begin position="342"/>
        <end position="362"/>
    </location>
</feature>
<feature type="region of interest" description="Disordered" evidence="2">
    <location>
        <begin position="1"/>
        <end position="23"/>
    </location>
</feature>
<feature type="compositionally biased region" description="Low complexity" evidence="2">
    <location>
        <begin position="11"/>
        <end position="23"/>
    </location>
</feature>
<feature type="binding site" description="axial binding residue" evidence="1">
    <location>
        <position position="290"/>
    </location>
    <ligand>
        <name>heme</name>
        <dbReference type="ChEBI" id="CHEBI:30413"/>
    </ligand>
    <ligandPart>
        <name>Fe</name>
        <dbReference type="ChEBI" id="CHEBI:18248"/>
    </ligandPart>
</feature>
<feature type="binding site" description="axial binding residue" evidence="1">
    <location>
        <position position="350"/>
    </location>
    <ligand>
        <name>heme</name>
        <dbReference type="ChEBI" id="CHEBI:30413"/>
    </ligand>
    <ligandPart>
        <name>Fe</name>
        <dbReference type="ChEBI" id="CHEBI:18248"/>
    </ligandPart>
</feature>
<dbReference type="EC" id="1.17.99.9" evidence="1"/>
<dbReference type="EMBL" id="CP000490">
    <property type="protein sequence ID" value="ABL71766.1"/>
    <property type="status" value="ALT_INIT"/>
    <property type="molecule type" value="Genomic_DNA"/>
</dbReference>
<dbReference type="RefSeq" id="WP_041530605.1">
    <property type="nucleotide sequence ID" value="NC_008687.1"/>
</dbReference>
<dbReference type="SMR" id="A1B8C2"/>
<dbReference type="STRING" id="318586.Pden_3699"/>
<dbReference type="EnsemblBacteria" id="ABL71766">
    <property type="protein sequence ID" value="ABL71766"/>
    <property type="gene ID" value="Pden_3699"/>
</dbReference>
<dbReference type="GeneID" id="93453357"/>
<dbReference type="KEGG" id="pde:Pden_3699"/>
<dbReference type="eggNOG" id="COG1612">
    <property type="taxonomic scope" value="Bacteria"/>
</dbReference>
<dbReference type="HOGENOM" id="CLU_017627_0_0_5"/>
<dbReference type="OrthoDB" id="9793156at2"/>
<dbReference type="UniPathway" id="UPA00269">
    <property type="reaction ID" value="UER00713"/>
</dbReference>
<dbReference type="Proteomes" id="UP000000361">
    <property type="component" value="Chromosome 2"/>
</dbReference>
<dbReference type="GO" id="GO:0005886">
    <property type="term" value="C:plasma membrane"/>
    <property type="evidence" value="ECO:0007669"/>
    <property type="project" value="UniProtKB-SubCell"/>
</dbReference>
<dbReference type="GO" id="GO:0046872">
    <property type="term" value="F:metal ion binding"/>
    <property type="evidence" value="ECO:0007669"/>
    <property type="project" value="UniProtKB-KW"/>
</dbReference>
<dbReference type="GO" id="GO:0016653">
    <property type="term" value="F:oxidoreductase activity, acting on NAD(P)H, heme protein as acceptor"/>
    <property type="evidence" value="ECO:0007669"/>
    <property type="project" value="InterPro"/>
</dbReference>
<dbReference type="GO" id="GO:0006784">
    <property type="term" value="P:heme A biosynthetic process"/>
    <property type="evidence" value="ECO:0007669"/>
    <property type="project" value="UniProtKB-UniRule"/>
</dbReference>
<dbReference type="HAMAP" id="MF_01665">
    <property type="entry name" value="HemeA_synth_type2"/>
    <property type="match status" value="1"/>
</dbReference>
<dbReference type="InterPro" id="IPR003780">
    <property type="entry name" value="COX15/CtaA_fam"/>
</dbReference>
<dbReference type="InterPro" id="IPR054616">
    <property type="entry name" value="HemA_synt_rhodobact"/>
</dbReference>
<dbReference type="InterPro" id="IPR023754">
    <property type="entry name" value="HemeA_Synthase_type2"/>
</dbReference>
<dbReference type="NCBIfam" id="NF045570">
    <property type="entry name" value="HemSynCtaAAlphapr"/>
    <property type="match status" value="1"/>
</dbReference>
<dbReference type="PANTHER" id="PTHR23289">
    <property type="entry name" value="CYTOCHROME C OXIDASE ASSEMBLY PROTEIN COX15"/>
    <property type="match status" value="1"/>
</dbReference>
<dbReference type="PANTHER" id="PTHR23289:SF2">
    <property type="entry name" value="CYTOCHROME C OXIDASE ASSEMBLY PROTEIN COX15 HOMOLOG"/>
    <property type="match status" value="1"/>
</dbReference>
<dbReference type="Pfam" id="PF02628">
    <property type="entry name" value="COX15-CtaA"/>
    <property type="match status" value="1"/>
</dbReference>
<protein>
    <recommendedName>
        <fullName evidence="1">Heme A synthase</fullName>
        <shortName evidence="1">HAS</shortName>
        <ecNumber evidence="1">1.17.99.9</ecNumber>
    </recommendedName>
    <alternativeName>
        <fullName evidence="1">Cytochrome aa3-controlling protein</fullName>
    </alternativeName>
</protein>
<keyword id="KW-1003">Cell membrane</keyword>
<keyword id="KW-0350">Heme biosynthesis</keyword>
<keyword id="KW-0408">Iron</keyword>
<keyword id="KW-0472">Membrane</keyword>
<keyword id="KW-0479">Metal-binding</keyword>
<keyword id="KW-0560">Oxidoreductase</keyword>
<keyword id="KW-1185">Reference proteome</keyword>
<keyword id="KW-0812">Transmembrane</keyword>
<keyword id="KW-1133">Transmembrane helix</keyword>
<sequence length="381" mass="41791">MARRPVFQEVTETTPPGTTPSGGMIDAGHKGARGAIRLWLVVLFVMVAAMIALGGATRLTGSGLSITEWKPVTGAIPPMDAATWQAEFDKYRQIPQFELVNSDMDLASFKRIYWWEWSHRLLGRLVGLVWAAGFVFFLATRRIPTGWTPRLLLLGALGGAQGAIGWWMVHSGLSGEMVRVASYRLATHLGLAFAILGLIAWYVLALSRSEAALLRARRAGEAKLFSMTTGLMHLAFVQILLGALVAGIDAGRMYTGWPTMGGEWIPAEIWDATLGWRNFFENPALVQFIHRMTGYLLAVFAVVVFLRARRSPHPVTRGAYVAMLVALAVQVALGIMNVLHASPLPLALAHQIGAVALFTLILRARHHARYPYETSVRGTVR</sequence>
<comment type="function">
    <text evidence="1">Catalyzes the conversion of heme O to heme A by two successive hydroxylations of the methyl group at C8. The first hydroxylation forms heme I, the second hydroxylation results in an unstable dihydroxymethyl group, which spontaneously dehydrates, resulting in the formyl group of heme A.</text>
</comment>
<comment type="catalytic activity">
    <reaction evidence="1">
        <text>Fe(II)-heme o + 2 A + H2O = Fe(II)-heme a + 2 AH2</text>
        <dbReference type="Rhea" id="RHEA:63388"/>
        <dbReference type="ChEBI" id="CHEBI:13193"/>
        <dbReference type="ChEBI" id="CHEBI:15377"/>
        <dbReference type="ChEBI" id="CHEBI:17499"/>
        <dbReference type="ChEBI" id="CHEBI:60530"/>
        <dbReference type="ChEBI" id="CHEBI:61715"/>
        <dbReference type="EC" id="1.17.99.9"/>
    </reaction>
    <physiologicalReaction direction="left-to-right" evidence="1">
        <dbReference type="Rhea" id="RHEA:63389"/>
    </physiologicalReaction>
</comment>
<comment type="cofactor">
    <cofactor evidence="1">
        <name>heme b</name>
        <dbReference type="ChEBI" id="CHEBI:60344"/>
    </cofactor>
</comment>
<comment type="pathway">
    <text evidence="1">Porphyrin-containing compound metabolism; heme A biosynthesis; heme A from heme O: step 1/1.</text>
</comment>
<comment type="subunit">
    <text evidence="1">Interacts with CtaB.</text>
</comment>
<comment type="subcellular location">
    <subcellularLocation>
        <location evidence="1">Cell membrane</location>
        <topology evidence="1">Multi-pass membrane protein</topology>
    </subcellularLocation>
</comment>
<comment type="similarity">
    <text evidence="1">Belongs to the COX15/CtaA family. Type 2 subfamily.</text>
</comment>
<comment type="sequence caution" evidence="3">
    <conflict type="erroneous initiation">
        <sequence resource="EMBL-CDS" id="ABL71766"/>
    </conflict>
</comment>